<reference key="1">
    <citation type="journal article" date="2007" name="PLoS Genet.">
        <title>Patterns and implications of gene gain and loss in the evolution of Prochlorococcus.</title>
        <authorList>
            <person name="Kettler G.C."/>
            <person name="Martiny A.C."/>
            <person name="Huang K."/>
            <person name="Zucker J."/>
            <person name="Coleman M.L."/>
            <person name="Rodrigue S."/>
            <person name="Chen F."/>
            <person name="Lapidus A."/>
            <person name="Ferriera S."/>
            <person name="Johnson J."/>
            <person name="Steglich C."/>
            <person name="Church G.M."/>
            <person name="Richardson P."/>
            <person name="Chisholm S.W."/>
        </authorList>
    </citation>
    <scope>NUCLEOTIDE SEQUENCE [LARGE SCALE GENOMIC DNA]</scope>
    <source>
        <strain>NATL2A</strain>
    </source>
</reference>
<protein>
    <recommendedName>
        <fullName evidence="1">Light-independent protochlorophyllide reductase subunit N</fullName>
        <shortName evidence="1">DPOR subunit N</shortName>
        <shortName evidence="1">LI-POR subunit N</shortName>
        <ecNumber evidence="1">1.3.7.7</ecNumber>
    </recommendedName>
</protein>
<gene>
    <name evidence="1" type="primary">chlN</name>
    <name type="ordered locus">PMN2A_1873</name>
</gene>
<evidence type="ECO:0000255" key="1">
    <source>
        <dbReference type="HAMAP-Rule" id="MF_00352"/>
    </source>
</evidence>
<accession>Q46GN5</accession>
<sequence>MSGATLLKESGPREVFCGLTSIVWLHRRMPDAFFLVVGSRTCAHLIQSAAGVMIFAEPRFGTAILEERDLAGLADAHDELNRVVKNLLARRPEIKTLFLVGSCPSEVIKIDLSRVAENLNIELKGQVTVLNYSGSGIETTFTQGEDGALKALIPLMPKSDQKKLLLVGTLANAVEDRLTSIFNRLGIDKVESFPPRQSTELPSIGPETKVLLTQPYLTDTARELKNKGAEIIEAPFPLGVTGSTLWIQAAADSFGIEKSLVDSILNPLISRAKQALIPHVEKLSGKKLFLLPESQLEIPLARFLSNECGMEIIEIGTPYLNRDLMKAEIDLLPPDCRIVEGQHVERQLDRVRDSSPDLVVCGMGLANPLEAEGISTKWSIEMVFSPIHGIDQASDLAELFSRPLRRHDILNPKTLTSN</sequence>
<proteinExistence type="inferred from homology"/>
<name>CHLN_PROMT</name>
<feature type="chain" id="PRO_0000324017" description="Light-independent protochlorophyllide reductase subunit N">
    <location>
        <begin position="1"/>
        <end position="418"/>
    </location>
</feature>
<feature type="binding site" evidence="1">
    <location>
        <position position="17"/>
    </location>
    <ligand>
        <name>[4Fe-4S] cluster</name>
        <dbReference type="ChEBI" id="CHEBI:49883"/>
        <note>ligand shared with heterodimeric partner</note>
    </ligand>
</feature>
<feature type="binding site" evidence="1">
    <location>
        <position position="42"/>
    </location>
    <ligand>
        <name>[4Fe-4S] cluster</name>
        <dbReference type="ChEBI" id="CHEBI:49883"/>
        <note>ligand shared with heterodimeric partner</note>
    </ligand>
</feature>
<feature type="binding site" evidence="1">
    <location>
        <position position="103"/>
    </location>
    <ligand>
        <name>[4Fe-4S] cluster</name>
        <dbReference type="ChEBI" id="CHEBI:49883"/>
        <note>ligand shared with heterodimeric partner</note>
    </ligand>
</feature>
<dbReference type="EC" id="1.3.7.7" evidence="1"/>
<dbReference type="EMBL" id="CP000095">
    <property type="protein sequence ID" value="AAZ59361.1"/>
    <property type="molecule type" value="Genomic_DNA"/>
</dbReference>
<dbReference type="RefSeq" id="WP_011294505.1">
    <property type="nucleotide sequence ID" value="NC_007335.2"/>
</dbReference>
<dbReference type="SMR" id="Q46GN5"/>
<dbReference type="STRING" id="59920.PMN2A_1873"/>
<dbReference type="KEGG" id="pmn:PMN2A_1873"/>
<dbReference type="HOGENOM" id="CLU_037170_0_0_3"/>
<dbReference type="OrthoDB" id="5714774at2"/>
<dbReference type="PhylomeDB" id="Q46GN5"/>
<dbReference type="UniPathway" id="UPA00670"/>
<dbReference type="Proteomes" id="UP000002535">
    <property type="component" value="Chromosome"/>
</dbReference>
<dbReference type="GO" id="GO:0051539">
    <property type="term" value="F:4 iron, 4 sulfur cluster binding"/>
    <property type="evidence" value="ECO:0007669"/>
    <property type="project" value="UniProtKB-UniRule"/>
</dbReference>
<dbReference type="GO" id="GO:0005524">
    <property type="term" value="F:ATP binding"/>
    <property type="evidence" value="ECO:0007669"/>
    <property type="project" value="UniProtKB-UniRule"/>
</dbReference>
<dbReference type="GO" id="GO:0046872">
    <property type="term" value="F:metal ion binding"/>
    <property type="evidence" value="ECO:0007669"/>
    <property type="project" value="UniProtKB-KW"/>
</dbReference>
<dbReference type="GO" id="GO:0016730">
    <property type="term" value="F:oxidoreductase activity, acting on iron-sulfur proteins as donors"/>
    <property type="evidence" value="ECO:0007669"/>
    <property type="project" value="InterPro"/>
</dbReference>
<dbReference type="GO" id="GO:0016636">
    <property type="term" value="F:oxidoreductase activity, acting on the CH-CH group of donors, iron-sulfur protein as acceptor"/>
    <property type="evidence" value="ECO:0007669"/>
    <property type="project" value="UniProtKB-UniRule"/>
</dbReference>
<dbReference type="GO" id="GO:0036068">
    <property type="term" value="P:light-independent chlorophyll biosynthetic process"/>
    <property type="evidence" value="ECO:0007669"/>
    <property type="project" value="UniProtKB-UniRule"/>
</dbReference>
<dbReference type="GO" id="GO:0019685">
    <property type="term" value="P:photosynthesis, dark reaction"/>
    <property type="evidence" value="ECO:0007669"/>
    <property type="project" value="InterPro"/>
</dbReference>
<dbReference type="Gene3D" id="3.40.50.1980">
    <property type="entry name" value="Nitrogenase molybdenum iron protein domain"/>
    <property type="match status" value="3"/>
</dbReference>
<dbReference type="HAMAP" id="MF_00352">
    <property type="entry name" value="ChlN_BchN"/>
    <property type="match status" value="1"/>
</dbReference>
<dbReference type="InterPro" id="IPR050293">
    <property type="entry name" value="LIPOR_BchN/ChlN"/>
</dbReference>
<dbReference type="InterPro" id="IPR000510">
    <property type="entry name" value="Nase/OxRdtase_comp1"/>
</dbReference>
<dbReference type="InterPro" id="IPR005970">
    <property type="entry name" value="Protochl_reductN"/>
</dbReference>
<dbReference type="NCBIfam" id="TIGR01279">
    <property type="entry name" value="DPOR_bchN"/>
    <property type="match status" value="1"/>
</dbReference>
<dbReference type="NCBIfam" id="NF002768">
    <property type="entry name" value="PRK02842.1"/>
    <property type="match status" value="1"/>
</dbReference>
<dbReference type="PANTHER" id="PTHR39429">
    <property type="entry name" value="LIGHT-INDEPENDENT PROTOCHLOROPHYLLIDE REDUCTASE SUBUNIT N"/>
    <property type="match status" value="1"/>
</dbReference>
<dbReference type="PANTHER" id="PTHR39429:SF3">
    <property type="entry name" value="LIGHT-INDEPENDENT PROTOCHLOROPHYLLIDE REDUCTASE SUBUNIT N"/>
    <property type="match status" value="1"/>
</dbReference>
<dbReference type="Pfam" id="PF00148">
    <property type="entry name" value="Oxidored_nitro"/>
    <property type="match status" value="1"/>
</dbReference>
<dbReference type="PIRSF" id="PIRSF000162">
    <property type="entry name" value="P_chlorophyll_rd"/>
    <property type="match status" value="1"/>
</dbReference>
<dbReference type="SUPFAM" id="SSF53807">
    <property type="entry name" value="Helical backbone' metal receptor"/>
    <property type="match status" value="1"/>
</dbReference>
<comment type="function">
    <text evidence="1">Component of the dark-operative protochlorophyllide reductase (DPOR) that uses Mg-ATP and reduced ferredoxin to reduce ring D of protochlorophyllide (Pchlide) to form chlorophyllide a (Chlide). This reaction is light-independent. The NB-protein (ChlN-ChlB) is the catalytic component of the complex.</text>
</comment>
<comment type="catalytic activity">
    <reaction evidence="1">
        <text>chlorophyllide a + oxidized 2[4Fe-4S]-[ferredoxin] + 2 ADP + 2 phosphate = protochlorophyllide a + reduced 2[4Fe-4S]-[ferredoxin] + 2 ATP + 2 H2O</text>
        <dbReference type="Rhea" id="RHEA:28202"/>
        <dbReference type="Rhea" id="RHEA-COMP:10002"/>
        <dbReference type="Rhea" id="RHEA-COMP:10004"/>
        <dbReference type="ChEBI" id="CHEBI:15377"/>
        <dbReference type="ChEBI" id="CHEBI:30616"/>
        <dbReference type="ChEBI" id="CHEBI:33722"/>
        <dbReference type="ChEBI" id="CHEBI:33723"/>
        <dbReference type="ChEBI" id="CHEBI:43474"/>
        <dbReference type="ChEBI" id="CHEBI:83348"/>
        <dbReference type="ChEBI" id="CHEBI:83350"/>
        <dbReference type="ChEBI" id="CHEBI:456216"/>
        <dbReference type="EC" id="1.3.7.7"/>
    </reaction>
</comment>
<comment type="cofactor">
    <cofactor evidence="1">
        <name>[4Fe-4S] cluster</name>
        <dbReference type="ChEBI" id="CHEBI:49883"/>
    </cofactor>
    <text evidence="1">Binds 1 [4Fe-4S] cluster per heterodimer. The cluster is bound at the heterodimer interface by residues from both subunits.</text>
</comment>
<comment type="pathway">
    <text evidence="1">Porphyrin-containing compound metabolism; chlorophyll biosynthesis (light-independent).</text>
</comment>
<comment type="subunit">
    <text evidence="1">Protochlorophyllide reductase is composed of three subunits; ChlL, ChlN and ChlB. Forms a heterotetramer of two ChlB and two ChlN subunits.</text>
</comment>
<comment type="similarity">
    <text evidence="1">Belongs to the BchN/ChlN family.</text>
</comment>
<keyword id="KW-0004">4Fe-4S</keyword>
<keyword id="KW-0067">ATP-binding</keyword>
<keyword id="KW-0149">Chlorophyll biosynthesis</keyword>
<keyword id="KW-0408">Iron</keyword>
<keyword id="KW-0411">Iron-sulfur</keyword>
<keyword id="KW-0479">Metal-binding</keyword>
<keyword id="KW-0547">Nucleotide-binding</keyword>
<keyword id="KW-0560">Oxidoreductase</keyword>
<keyword id="KW-0602">Photosynthesis</keyword>
<keyword id="KW-1185">Reference proteome</keyword>
<organism>
    <name type="scientific">Prochlorococcus marinus (strain NATL2A)</name>
    <dbReference type="NCBI Taxonomy" id="59920"/>
    <lineage>
        <taxon>Bacteria</taxon>
        <taxon>Bacillati</taxon>
        <taxon>Cyanobacteriota</taxon>
        <taxon>Cyanophyceae</taxon>
        <taxon>Synechococcales</taxon>
        <taxon>Prochlorococcaceae</taxon>
        <taxon>Prochlorococcus</taxon>
    </lineage>
</organism>